<comment type="function">
    <text evidence="1">Endonuclease that specifically degrades the RNA of RNA-DNA hybrids.</text>
</comment>
<comment type="catalytic activity">
    <reaction evidence="1">
        <text>Endonucleolytic cleavage to 5'-phosphomonoester.</text>
        <dbReference type="EC" id="3.1.26.4"/>
    </reaction>
</comment>
<comment type="cofactor">
    <cofactor evidence="1">
        <name>Mn(2+)</name>
        <dbReference type="ChEBI" id="CHEBI:29035"/>
    </cofactor>
    <cofactor evidence="1">
        <name>Mg(2+)</name>
        <dbReference type="ChEBI" id="CHEBI:18420"/>
    </cofactor>
    <text evidence="1">Manganese or magnesium. Binds 1 divalent metal ion per monomer in the absence of substrate. May bind a second metal ion after substrate binding.</text>
</comment>
<comment type="subcellular location">
    <subcellularLocation>
        <location evidence="1">Cytoplasm</location>
    </subcellularLocation>
</comment>
<comment type="similarity">
    <text evidence="1">Belongs to the RNase HII family.</text>
</comment>
<proteinExistence type="inferred from homology"/>
<feature type="chain" id="PRO_0000334976" description="Ribonuclease HII">
    <location>
        <begin position="1"/>
        <end position="240"/>
    </location>
</feature>
<feature type="domain" description="RNase H type-2" evidence="2">
    <location>
        <begin position="7"/>
        <end position="215"/>
    </location>
</feature>
<feature type="binding site" evidence="1">
    <location>
        <position position="13"/>
    </location>
    <ligand>
        <name>a divalent metal cation</name>
        <dbReference type="ChEBI" id="CHEBI:60240"/>
    </ligand>
</feature>
<feature type="binding site" evidence="1">
    <location>
        <position position="14"/>
    </location>
    <ligand>
        <name>a divalent metal cation</name>
        <dbReference type="ChEBI" id="CHEBI:60240"/>
    </ligand>
</feature>
<feature type="binding site" evidence="1">
    <location>
        <position position="112"/>
    </location>
    <ligand>
        <name>a divalent metal cation</name>
        <dbReference type="ChEBI" id="CHEBI:60240"/>
    </ligand>
</feature>
<accession>A2BL34</accession>
<protein>
    <recommendedName>
        <fullName evidence="1">Ribonuclease HII</fullName>
        <shortName evidence="1">RNase HII</shortName>
        <ecNumber evidence="1">3.1.26.4</ecNumber>
    </recommendedName>
</protein>
<gene>
    <name evidence="1" type="primary">rnhB</name>
    <name type="ordered locus">Hbut_0844</name>
</gene>
<name>RNH2_HYPBU</name>
<keyword id="KW-0963">Cytoplasm</keyword>
<keyword id="KW-0255">Endonuclease</keyword>
<keyword id="KW-0378">Hydrolase</keyword>
<keyword id="KW-0464">Manganese</keyword>
<keyword id="KW-0479">Metal-binding</keyword>
<keyword id="KW-0540">Nuclease</keyword>
<keyword id="KW-1185">Reference proteome</keyword>
<sequence>MQRRRCRYAIGIDEAGRGPVIGPMVVVGVAVCSNDIDKLVALGVRDSKQLTPVVRAKLYGEILRVALHSVIVKLPPALLDAVNLNQLEVETFEYIASRIAGVHDSPEAVYVDAVGSPEKLAARLSGRLGVRVIAEPGADKTYPIVSAASIVAKVVRDAEIRMLRRLYGVRGSGYPTDPETIAWLAEEYRRNPANPPWFVRRTWSTLKRIAPGWYVEKQATTQPPRGQRSLLDYLLGEKQS</sequence>
<reference key="1">
    <citation type="journal article" date="2007" name="Archaea">
        <title>The genome of Hyperthermus butylicus: a sulfur-reducing, peptide fermenting, neutrophilic Crenarchaeote growing up to 108 degrees C.</title>
        <authorList>
            <person name="Bruegger K."/>
            <person name="Chen L."/>
            <person name="Stark M."/>
            <person name="Zibat A."/>
            <person name="Redder P."/>
            <person name="Ruepp A."/>
            <person name="Awayez M."/>
            <person name="She Q."/>
            <person name="Garrett R.A."/>
            <person name="Klenk H.-P."/>
        </authorList>
    </citation>
    <scope>NUCLEOTIDE SEQUENCE [LARGE SCALE GENOMIC DNA]</scope>
    <source>
        <strain>DSM 5456 / JCM 9403 / PLM1-5</strain>
    </source>
</reference>
<organism>
    <name type="scientific">Hyperthermus butylicus (strain DSM 5456 / JCM 9403 / PLM1-5)</name>
    <dbReference type="NCBI Taxonomy" id="415426"/>
    <lineage>
        <taxon>Archaea</taxon>
        <taxon>Thermoproteota</taxon>
        <taxon>Thermoprotei</taxon>
        <taxon>Desulfurococcales</taxon>
        <taxon>Pyrodictiaceae</taxon>
        <taxon>Hyperthermus</taxon>
    </lineage>
</organism>
<evidence type="ECO:0000255" key="1">
    <source>
        <dbReference type="HAMAP-Rule" id="MF_00052"/>
    </source>
</evidence>
<evidence type="ECO:0000255" key="2">
    <source>
        <dbReference type="PROSITE-ProRule" id="PRU01319"/>
    </source>
</evidence>
<dbReference type="EC" id="3.1.26.4" evidence="1"/>
<dbReference type="EMBL" id="CP000493">
    <property type="protein sequence ID" value="ABM80695.1"/>
    <property type="molecule type" value="Genomic_DNA"/>
</dbReference>
<dbReference type="SMR" id="A2BL34"/>
<dbReference type="STRING" id="415426.Hbut_0844"/>
<dbReference type="EnsemblBacteria" id="ABM80695">
    <property type="protein sequence ID" value="ABM80695"/>
    <property type="gene ID" value="Hbut_0844"/>
</dbReference>
<dbReference type="KEGG" id="hbu:Hbut_0844"/>
<dbReference type="eggNOG" id="arCOG04121">
    <property type="taxonomic scope" value="Archaea"/>
</dbReference>
<dbReference type="HOGENOM" id="CLU_036532_0_4_2"/>
<dbReference type="OrthoDB" id="33866at2157"/>
<dbReference type="Proteomes" id="UP000002593">
    <property type="component" value="Chromosome"/>
</dbReference>
<dbReference type="GO" id="GO:0005737">
    <property type="term" value="C:cytoplasm"/>
    <property type="evidence" value="ECO:0007669"/>
    <property type="project" value="UniProtKB-SubCell"/>
</dbReference>
<dbReference type="GO" id="GO:0032299">
    <property type="term" value="C:ribonuclease H2 complex"/>
    <property type="evidence" value="ECO:0007669"/>
    <property type="project" value="TreeGrafter"/>
</dbReference>
<dbReference type="GO" id="GO:0030145">
    <property type="term" value="F:manganese ion binding"/>
    <property type="evidence" value="ECO:0007669"/>
    <property type="project" value="UniProtKB-UniRule"/>
</dbReference>
<dbReference type="GO" id="GO:0003723">
    <property type="term" value="F:RNA binding"/>
    <property type="evidence" value="ECO:0007669"/>
    <property type="project" value="InterPro"/>
</dbReference>
<dbReference type="GO" id="GO:0004523">
    <property type="term" value="F:RNA-DNA hybrid ribonuclease activity"/>
    <property type="evidence" value="ECO:0007669"/>
    <property type="project" value="UniProtKB-UniRule"/>
</dbReference>
<dbReference type="GO" id="GO:0043137">
    <property type="term" value="P:DNA replication, removal of RNA primer"/>
    <property type="evidence" value="ECO:0007669"/>
    <property type="project" value="TreeGrafter"/>
</dbReference>
<dbReference type="GO" id="GO:0006298">
    <property type="term" value="P:mismatch repair"/>
    <property type="evidence" value="ECO:0007669"/>
    <property type="project" value="TreeGrafter"/>
</dbReference>
<dbReference type="CDD" id="cd07180">
    <property type="entry name" value="RNase_HII_archaea_like"/>
    <property type="match status" value="1"/>
</dbReference>
<dbReference type="Gene3D" id="3.30.420.10">
    <property type="entry name" value="Ribonuclease H-like superfamily/Ribonuclease H"/>
    <property type="match status" value="1"/>
</dbReference>
<dbReference type="Gene3D" id="1.10.10.460">
    <property type="entry name" value="Ribonuclease hii. Domain 2"/>
    <property type="match status" value="1"/>
</dbReference>
<dbReference type="HAMAP" id="MF_00052_A">
    <property type="entry name" value="RNase_HII_A"/>
    <property type="match status" value="1"/>
</dbReference>
<dbReference type="InterPro" id="IPR004649">
    <property type="entry name" value="RNase_H2_suA"/>
</dbReference>
<dbReference type="InterPro" id="IPR001352">
    <property type="entry name" value="RNase_HII/HIII"/>
</dbReference>
<dbReference type="InterPro" id="IPR024567">
    <property type="entry name" value="RNase_HII/HIII_dom"/>
</dbReference>
<dbReference type="InterPro" id="IPR020787">
    <property type="entry name" value="RNase_HII_arc"/>
</dbReference>
<dbReference type="InterPro" id="IPR023160">
    <property type="entry name" value="RNase_HII_hlx-loop-hlx_cap_dom"/>
</dbReference>
<dbReference type="InterPro" id="IPR012337">
    <property type="entry name" value="RNaseH-like_sf"/>
</dbReference>
<dbReference type="InterPro" id="IPR036397">
    <property type="entry name" value="RNaseH_sf"/>
</dbReference>
<dbReference type="NCBIfam" id="TIGR00729">
    <property type="entry name" value="ribonuclease HII"/>
    <property type="match status" value="1"/>
</dbReference>
<dbReference type="PANTHER" id="PTHR10954:SF23">
    <property type="entry name" value="RIBONUCLEASE"/>
    <property type="match status" value="1"/>
</dbReference>
<dbReference type="PANTHER" id="PTHR10954">
    <property type="entry name" value="RIBONUCLEASE H2 SUBUNIT A"/>
    <property type="match status" value="1"/>
</dbReference>
<dbReference type="Pfam" id="PF01351">
    <property type="entry name" value="RNase_HII"/>
    <property type="match status" value="1"/>
</dbReference>
<dbReference type="SUPFAM" id="SSF53098">
    <property type="entry name" value="Ribonuclease H-like"/>
    <property type="match status" value="1"/>
</dbReference>
<dbReference type="PROSITE" id="PS51975">
    <property type="entry name" value="RNASE_H_2"/>
    <property type="match status" value="1"/>
</dbReference>